<evidence type="ECO:0000250" key="1"/>
<evidence type="ECO:0000250" key="2">
    <source>
        <dbReference type="UniProtKB" id="P97737"/>
    </source>
</evidence>
<evidence type="ECO:0000255" key="3"/>
<evidence type="ECO:0000256" key="4">
    <source>
        <dbReference type="SAM" id="MobiDB-lite"/>
    </source>
</evidence>
<evidence type="ECO:0000269" key="5">
    <source>
    </source>
</evidence>
<evidence type="ECO:0000305" key="6"/>
<evidence type="ECO:0000312" key="7">
    <source>
        <dbReference type="HGNC" id="HGNC:4215"/>
    </source>
</evidence>
<name>GDF10_HUMAN</name>
<protein>
    <recommendedName>
        <fullName>Growth/differentiation factor 10</fullName>
        <shortName>GDF-10</shortName>
    </recommendedName>
    <alternativeName>
        <fullName>Bone morphogenetic protein 3B</fullName>
        <shortName>BMP-3B</shortName>
    </alternativeName>
    <alternativeName>
        <fullName>Bone-inducing protein</fullName>
        <shortName>BIP</shortName>
    </alternativeName>
</protein>
<dbReference type="EMBL" id="D49493">
    <property type="protein sequence ID" value="BAA08453.1"/>
    <property type="molecule type" value="Genomic_DNA"/>
</dbReference>
<dbReference type="EMBL" id="D49492">
    <property type="protein sequence ID" value="BAA08452.1"/>
    <property type="molecule type" value="mRNA"/>
</dbReference>
<dbReference type="EMBL" id="AL731561">
    <property type="status" value="NOT_ANNOTATED_CDS"/>
    <property type="molecule type" value="Genomic_DNA"/>
</dbReference>
<dbReference type="EMBL" id="CH471251">
    <property type="protein sequence ID" value="EAW50661.1"/>
    <property type="molecule type" value="Genomic_DNA"/>
</dbReference>
<dbReference type="EMBL" id="L42113">
    <property type="protein sequence ID" value="AAL77527.1"/>
    <property type="molecule type" value="mRNA"/>
</dbReference>
<dbReference type="CCDS" id="CCDS73117.1"/>
<dbReference type="PIR" id="JC4838">
    <property type="entry name" value="JC4838"/>
</dbReference>
<dbReference type="RefSeq" id="NP_004953.1">
    <property type="nucleotide sequence ID" value="NM_004962.5"/>
</dbReference>
<dbReference type="SMR" id="P55107"/>
<dbReference type="BioGRID" id="108931">
    <property type="interactions" value="24"/>
</dbReference>
<dbReference type="FunCoup" id="P55107">
    <property type="interactions" value="427"/>
</dbReference>
<dbReference type="IntAct" id="P55107">
    <property type="interactions" value="9"/>
</dbReference>
<dbReference type="STRING" id="9606.ENSP00000464145"/>
<dbReference type="GlyCosmos" id="P55107">
    <property type="glycosylation" value="4 sites, No reported glycans"/>
</dbReference>
<dbReference type="GlyGen" id="P55107">
    <property type="glycosylation" value="5 sites, 1 N-linked glycan (1 site)"/>
</dbReference>
<dbReference type="iPTMnet" id="P55107"/>
<dbReference type="PhosphoSitePlus" id="P55107"/>
<dbReference type="BioMuta" id="GDF10"/>
<dbReference type="DMDM" id="1705471"/>
<dbReference type="MassIVE" id="P55107"/>
<dbReference type="PaxDb" id="9606-ENSP00000464145"/>
<dbReference type="PeptideAtlas" id="P55107"/>
<dbReference type="ProteomicsDB" id="56792"/>
<dbReference type="Antibodypedia" id="73579">
    <property type="antibodies" value="272 antibodies from 28 providers"/>
</dbReference>
<dbReference type="DNASU" id="2662"/>
<dbReference type="Ensembl" id="ENST00000580279.2">
    <property type="protein sequence ID" value="ENSP00000464145.1"/>
    <property type="gene ID" value="ENSG00000266524.3"/>
</dbReference>
<dbReference type="GeneID" id="2662"/>
<dbReference type="KEGG" id="hsa:2662"/>
<dbReference type="MANE-Select" id="ENST00000580279.2">
    <property type="protein sequence ID" value="ENSP00000464145.1"/>
    <property type="RefSeq nucleotide sequence ID" value="NM_004962.5"/>
    <property type="RefSeq protein sequence ID" value="NP_004953.1"/>
</dbReference>
<dbReference type="UCSC" id="uc001jfb.4">
    <property type="organism name" value="human"/>
</dbReference>
<dbReference type="AGR" id="HGNC:4215"/>
<dbReference type="CTD" id="2662"/>
<dbReference type="DisGeNET" id="2662"/>
<dbReference type="GeneCards" id="GDF10"/>
<dbReference type="HGNC" id="HGNC:4215">
    <property type="gene designation" value="GDF10"/>
</dbReference>
<dbReference type="HPA" id="ENSG00000266524">
    <property type="expression patterns" value="Tissue enhanced (lung, retina)"/>
</dbReference>
<dbReference type="MalaCards" id="GDF10"/>
<dbReference type="MIM" id="601361">
    <property type="type" value="gene"/>
</dbReference>
<dbReference type="neXtProt" id="NX_P55107"/>
<dbReference type="OpenTargets" id="ENSG00000266524"/>
<dbReference type="PharmGKB" id="PA28630"/>
<dbReference type="VEuPathDB" id="HostDB:ENSG00000266524"/>
<dbReference type="eggNOG" id="KOG3900">
    <property type="taxonomic scope" value="Eukaryota"/>
</dbReference>
<dbReference type="GeneTree" id="ENSGT00940000157214"/>
<dbReference type="HOGENOM" id="CLU_020515_10_0_1"/>
<dbReference type="InParanoid" id="P55107"/>
<dbReference type="OMA" id="VHMLKLY"/>
<dbReference type="OrthoDB" id="5987191at2759"/>
<dbReference type="PAN-GO" id="P55107">
    <property type="GO annotations" value="4 GO annotations based on evolutionary models"/>
</dbReference>
<dbReference type="PhylomeDB" id="P55107"/>
<dbReference type="TreeFam" id="TF316134"/>
<dbReference type="PathwayCommons" id="P55107"/>
<dbReference type="SignaLink" id="P55107"/>
<dbReference type="BioGRID-ORCS" id="2662">
    <property type="hits" value="17 hits in 1139 CRISPR screens"/>
</dbReference>
<dbReference type="ChiTaRS" id="GDF10">
    <property type="organism name" value="human"/>
</dbReference>
<dbReference type="GeneWiki" id="GDF10"/>
<dbReference type="GenomeRNAi" id="2662"/>
<dbReference type="Pharos" id="P55107">
    <property type="development level" value="Tbio"/>
</dbReference>
<dbReference type="PRO" id="PR:P55107"/>
<dbReference type="Proteomes" id="UP000005640">
    <property type="component" value="Chromosome 10"/>
</dbReference>
<dbReference type="RNAct" id="P55107">
    <property type="molecule type" value="protein"/>
</dbReference>
<dbReference type="Bgee" id="ENSG00000266524">
    <property type="expression patterns" value="Expressed in male germ line stem cell (sensu Vertebrata) in testis and 116 other cell types or tissues"/>
</dbReference>
<dbReference type="GO" id="GO:0062023">
    <property type="term" value="C:collagen-containing extracellular matrix"/>
    <property type="evidence" value="ECO:0007005"/>
    <property type="project" value="BHF-UCL"/>
</dbReference>
<dbReference type="GO" id="GO:0005615">
    <property type="term" value="C:extracellular space"/>
    <property type="evidence" value="ECO:0000318"/>
    <property type="project" value="GO_Central"/>
</dbReference>
<dbReference type="GO" id="GO:0005125">
    <property type="term" value="F:cytokine activity"/>
    <property type="evidence" value="ECO:0000318"/>
    <property type="project" value="GO_Central"/>
</dbReference>
<dbReference type="GO" id="GO:0008083">
    <property type="term" value="F:growth factor activity"/>
    <property type="evidence" value="ECO:0000304"/>
    <property type="project" value="ProtInc"/>
</dbReference>
<dbReference type="GO" id="GO:0043539">
    <property type="term" value="F:protein serine/threonine kinase activator activity"/>
    <property type="evidence" value="ECO:0000305"/>
    <property type="project" value="UniProt"/>
</dbReference>
<dbReference type="GO" id="GO:0021549">
    <property type="term" value="P:cerebellum development"/>
    <property type="evidence" value="ECO:0007669"/>
    <property type="project" value="Ensembl"/>
</dbReference>
<dbReference type="GO" id="GO:0045444">
    <property type="term" value="P:fat cell differentiation"/>
    <property type="evidence" value="ECO:0007669"/>
    <property type="project" value="Ensembl"/>
</dbReference>
<dbReference type="GO" id="GO:0030279">
    <property type="term" value="P:negative regulation of ossification"/>
    <property type="evidence" value="ECO:0000314"/>
    <property type="project" value="UniProt"/>
</dbReference>
<dbReference type="GO" id="GO:0001649">
    <property type="term" value="P:osteoblast differentiation"/>
    <property type="evidence" value="ECO:0007669"/>
    <property type="project" value="Ensembl"/>
</dbReference>
<dbReference type="GO" id="GO:0042698">
    <property type="term" value="P:ovulation cycle"/>
    <property type="evidence" value="ECO:0007669"/>
    <property type="project" value="Ensembl"/>
</dbReference>
<dbReference type="GO" id="GO:0045669">
    <property type="term" value="P:positive regulation of osteoblast differentiation"/>
    <property type="evidence" value="ECO:0000318"/>
    <property type="project" value="GO_Central"/>
</dbReference>
<dbReference type="GO" id="GO:1904373">
    <property type="term" value="P:response to kainic acid"/>
    <property type="evidence" value="ECO:0007669"/>
    <property type="project" value="Ensembl"/>
</dbReference>
<dbReference type="GO" id="GO:0001501">
    <property type="term" value="P:skeletal system development"/>
    <property type="evidence" value="ECO:0000304"/>
    <property type="project" value="ProtInc"/>
</dbReference>
<dbReference type="GO" id="GO:0007179">
    <property type="term" value="P:transforming growth factor beta receptor signaling pathway"/>
    <property type="evidence" value="ECO:0000304"/>
    <property type="project" value="ProtInc"/>
</dbReference>
<dbReference type="CDD" id="cd19394">
    <property type="entry name" value="TGF_beta_GDF10"/>
    <property type="match status" value="1"/>
</dbReference>
<dbReference type="FunFam" id="2.10.90.10:FF:000008">
    <property type="entry name" value="Bone morphogenetic protein 3"/>
    <property type="match status" value="1"/>
</dbReference>
<dbReference type="Gene3D" id="2.10.90.10">
    <property type="entry name" value="Cystine-knot cytokines"/>
    <property type="match status" value="1"/>
</dbReference>
<dbReference type="InterPro" id="IPR017197">
    <property type="entry name" value="BMP3/BMP3B"/>
</dbReference>
<dbReference type="InterPro" id="IPR029034">
    <property type="entry name" value="Cystine-knot_cytokine"/>
</dbReference>
<dbReference type="InterPro" id="IPR001839">
    <property type="entry name" value="TGF-b_C"/>
</dbReference>
<dbReference type="InterPro" id="IPR015615">
    <property type="entry name" value="TGF-beta-rel"/>
</dbReference>
<dbReference type="InterPro" id="IPR017948">
    <property type="entry name" value="TGFb_CS"/>
</dbReference>
<dbReference type="PANTHER" id="PTHR11848:SF145">
    <property type="entry name" value="GROWTH_DIFFERENTIATION FACTOR 10"/>
    <property type="match status" value="1"/>
</dbReference>
<dbReference type="PANTHER" id="PTHR11848">
    <property type="entry name" value="TGF-BETA FAMILY"/>
    <property type="match status" value="1"/>
</dbReference>
<dbReference type="Pfam" id="PF00019">
    <property type="entry name" value="TGF_beta"/>
    <property type="match status" value="1"/>
</dbReference>
<dbReference type="PIRSF" id="PIRSF037403">
    <property type="entry name" value="BMP3/GDF10"/>
    <property type="match status" value="1"/>
</dbReference>
<dbReference type="SMART" id="SM00204">
    <property type="entry name" value="TGFB"/>
    <property type="match status" value="1"/>
</dbReference>
<dbReference type="SUPFAM" id="SSF57501">
    <property type="entry name" value="Cystine-knot cytokines"/>
    <property type="match status" value="1"/>
</dbReference>
<dbReference type="PROSITE" id="PS00250">
    <property type="entry name" value="TGF_BETA_1"/>
    <property type="match status" value="1"/>
</dbReference>
<dbReference type="PROSITE" id="PS51362">
    <property type="entry name" value="TGF_BETA_2"/>
    <property type="match status" value="1"/>
</dbReference>
<sequence>MAHVPARTSPGPGPQLLLLLLPLFLLLLRDVAGSHRAPAWSALPAAADGLQGDRDLQRHPGDAAATLGPSAQDMVAVHMHRLYEKYSRQGARPGGGNTVRSFRARLEVVDQKAVYFFNLTSMQDSEMILTATFHFYSEPPRWPRALEVLCKPRAKNASGRPLPLGPPTRQHLLFRSLSQNTATQGLLRGAMALAPPPRGLWQAKDISPIVKAARRDGELLLSAQLDSEERDPGVPRPSPYAPYILVYANDLAISEPNSVAVTLQRYDPFPAGDPEPRAAPNNSADPRVRRAAQATGPLQDNELPGLDERPPRAHAQHFHKHQLWPSPFRALKPRPGRKDRRKKGQEVFMAASQVLDFDEKTMQKARRKQWDEPRVCSRRYLKVDFADIGWNEWIISPKSFDAYYCAGACEFPMPKIVRPSNHATIQSIVRAVGIIPGIPEPCCVPDKMNSLGVLFLDENRNVVLKVYPNMSVDTCACR</sequence>
<organism>
    <name type="scientific">Homo sapiens</name>
    <name type="common">Human</name>
    <dbReference type="NCBI Taxonomy" id="9606"/>
    <lineage>
        <taxon>Eukaryota</taxon>
        <taxon>Metazoa</taxon>
        <taxon>Chordata</taxon>
        <taxon>Craniata</taxon>
        <taxon>Vertebrata</taxon>
        <taxon>Euteleostomi</taxon>
        <taxon>Mammalia</taxon>
        <taxon>Eutheria</taxon>
        <taxon>Euarchontoglires</taxon>
        <taxon>Primates</taxon>
        <taxon>Haplorrhini</taxon>
        <taxon>Catarrhini</taxon>
        <taxon>Hominidae</taxon>
        <taxon>Homo</taxon>
    </lineage>
</organism>
<gene>
    <name evidence="7" type="primary">GDF10</name>
    <name type="synonym">BMP3B</name>
</gene>
<feature type="signal peptide" evidence="3">
    <location>
        <begin position="1"/>
        <end position="33"/>
    </location>
</feature>
<feature type="propeptide" id="PRO_0000033844" evidence="3">
    <location>
        <begin position="34"/>
        <end position="368"/>
    </location>
</feature>
<feature type="chain" id="PRO_0000033845" description="Growth/differentiation factor 10">
    <location>
        <begin position="369"/>
        <end position="478"/>
    </location>
</feature>
<feature type="region of interest" description="Disordered" evidence="4">
    <location>
        <begin position="266"/>
        <end position="319"/>
    </location>
</feature>
<feature type="glycosylation site" description="N-linked (GlcNAc...) asparagine" evidence="3">
    <location>
        <position position="118"/>
    </location>
</feature>
<feature type="glycosylation site" description="N-linked (GlcNAc...) asparagine" evidence="3">
    <location>
        <position position="156"/>
    </location>
</feature>
<feature type="glycosylation site" description="N-linked (GlcNAc...) asparagine" evidence="3">
    <location>
        <position position="281"/>
    </location>
</feature>
<feature type="glycosylation site" description="N-linked (GlcNAc...) asparagine" evidence="3">
    <location>
        <position position="469"/>
    </location>
</feature>
<feature type="disulfide bond" evidence="1">
    <location>
        <begin position="376"/>
        <end position="443"/>
    </location>
</feature>
<feature type="disulfide bond" evidence="1">
    <location>
        <begin position="405"/>
        <end position="475"/>
    </location>
</feature>
<feature type="disulfide bond" evidence="1">
    <location>
        <begin position="409"/>
        <end position="477"/>
    </location>
</feature>
<feature type="disulfide bond" description="Interchain" evidence="1">
    <location>
        <position position="442"/>
    </location>
</feature>
<comment type="function">
    <text evidence="2">Growth factor involved in osteogenesis and adipogenesis. Plays an inhibitory role in the process of osteoblast differentiation via SMAD2/3 pathway. Plays an inhibitory role in the process of adipogenesis.</text>
</comment>
<comment type="subunit">
    <text evidence="2">Homodimer or heterodimer. Can form a non-covalent complex of the mature region and the pro-region.</text>
</comment>
<comment type="subcellular location">
    <subcellularLocation>
        <location evidence="2">Secreted</location>
    </subcellularLocation>
</comment>
<comment type="tissue specificity">
    <text evidence="5">Expressed in femur, brain, lung, skeletal muscle, pancreas and testis.</text>
</comment>
<comment type="similarity">
    <text evidence="6">Belongs to the TGF-beta family.</text>
</comment>
<reference key="1">
    <citation type="journal article" date="1996" name="Biochem. Biophys. Res. Commun.">
        <title>cDNA cloning and genomic structure of human bone morphogenetic protein-3B (BMP-3b).</title>
        <authorList>
            <person name="Hino J."/>
            <person name="Takao M."/>
            <person name="Takeshita N."/>
            <person name="Konno Y."/>
            <person name="Nishizawa T."/>
            <person name="Matsuo H."/>
            <person name="Kangawa K."/>
        </authorList>
    </citation>
    <scope>NUCLEOTIDE SEQUENCE [GENOMIC DNA / MRNA]</scope>
    <scope>TISSUE SPECIFICITY</scope>
    <source>
        <tissue>Femur</tissue>
    </source>
</reference>
<reference key="2">
    <citation type="journal article" date="2004" name="Nature">
        <title>The DNA sequence and comparative analysis of human chromosome 10.</title>
        <authorList>
            <person name="Deloukas P."/>
            <person name="Earthrowl M.E."/>
            <person name="Grafham D.V."/>
            <person name="Rubenfield M."/>
            <person name="French L."/>
            <person name="Steward C.A."/>
            <person name="Sims S.K."/>
            <person name="Jones M.C."/>
            <person name="Searle S."/>
            <person name="Scott C."/>
            <person name="Howe K."/>
            <person name="Hunt S.E."/>
            <person name="Andrews T.D."/>
            <person name="Gilbert J.G.R."/>
            <person name="Swarbreck D."/>
            <person name="Ashurst J.L."/>
            <person name="Taylor A."/>
            <person name="Battles J."/>
            <person name="Bird C.P."/>
            <person name="Ainscough R."/>
            <person name="Almeida J.P."/>
            <person name="Ashwell R.I.S."/>
            <person name="Ambrose K.D."/>
            <person name="Babbage A.K."/>
            <person name="Bagguley C.L."/>
            <person name="Bailey J."/>
            <person name="Banerjee R."/>
            <person name="Bates K."/>
            <person name="Beasley H."/>
            <person name="Bray-Allen S."/>
            <person name="Brown A.J."/>
            <person name="Brown J.Y."/>
            <person name="Burford D.C."/>
            <person name="Burrill W."/>
            <person name="Burton J."/>
            <person name="Cahill P."/>
            <person name="Camire D."/>
            <person name="Carter N.P."/>
            <person name="Chapman J.C."/>
            <person name="Clark S.Y."/>
            <person name="Clarke G."/>
            <person name="Clee C.M."/>
            <person name="Clegg S."/>
            <person name="Corby N."/>
            <person name="Coulson A."/>
            <person name="Dhami P."/>
            <person name="Dutta I."/>
            <person name="Dunn M."/>
            <person name="Faulkner L."/>
            <person name="Frankish A."/>
            <person name="Frankland J.A."/>
            <person name="Garner P."/>
            <person name="Garnett J."/>
            <person name="Gribble S."/>
            <person name="Griffiths C."/>
            <person name="Grocock R."/>
            <person name="Gustafson E."/>
            <person name="Hammond S."/>
            <person name="Harley J.L."/>
            <person name="Hart E."/>
            <person name="Heath P.D."/>
            <person name="Ho T.P."/>
            <person name="Hopkins B."/>
            <person name="Horne J."/>
            <person name="Howden P.J."/>
            <person name="Huckle E."/>
            <person name="Hynds C."/>
            <person name="Johnson C."/>
            <person name="Johnson D."/>
            <person name="Kana A."/>
            <person name="Kay M."/>
            <person name="Kimberley A.M."/>
            <person name="Kershaw J.K."/>
            <person name="Kokkinaki M."/>
            <person name="Laird G.K."/>
            <person name="Lawlor S."/>
            <person name="Lee H.M."/>
            <person name="Leongamornlert D.A."/>
            <person name="Laird G."/>
            <person name="Lloyd C."/>
            <person name="Lloyd D.M."/>
            <person name="Loveland J."/>
            <person name="Lovell J."/>
            <person name="McLaren S."/>
            <person name="McLay K.E."/>
            <person name="McMurray A."/>
            <person name="Mashreghi-Mohammadi M."/>
            <person name="Matthews L."/>
            <person name="Milne S."/>
            <person name="Nickerson T."/>
            <person name="Nguyen M."/>
            <person name="Overton-Larty E."/>
            <person name="Palmer S.A."/>
            <person name="Pearce A.V."/>
            <person name="Peck A.I."/>
            <person name="Pelan S."/>
            <person name="Phillimore B."/>
            <person name="Porter K."/>
            <person name="Rice C.M."/>
            <person name="Rogosin A."/>
            <person name="Ross M.T."/>
            <person name="Sarafidou T."/>
            <person name="Sehra H.K."/>
            <person name="Shownkeen R."/>
            <person name="Skuce C.D."/>
            <person name="Smith M."/>
            <person name="Standring L."/>
            <person name="Sycamore N."/>
            <person name="Tester J."/>
            <person name="Thorpe A."/>
            <person name="Torcasso W."/>
            <person name="Tracey A."/>
            <person name="Tromans A."/>
            <person name="Tsolas J."/>
            <person name="Wall M."/>
            <person name="Walsh J."/>
            <person name="Wang H."/>
            <person name="Weinstock K."/>
            <person name="West A.P."/>
            <person name="Willey D.L."/>
            <person name="Whitehead S.L."/>
            <person name="Wilming L."/>
            <person name="Wray P.W."/>
            <person name="Young L."/>
            <person name="Chen Y."/>
            <person name="Lovering R.C."/>
            <person name="Moschonas N.K."/>
            <person name="Siebert R."/>
            <person name="Fechtel K."/>
            <person name="Bentley D."/>
            <person name="Durbin R.M."/>
            <person name="Hubbard T."/>
            <person name="Doucette-Stamm L."/>
            <person name="Beck S."/>
            <person name="Smith D.R."/>
            <person name="Rogers J."/>
        </authorList>
    </citation>
    <scope>NUCLEOTIDE SEQUENCE [LARGE SCALE GENOMIC DNA]</scope>
</reference>
<reference key="3">
    <citation type="submission" date="2005-07" db="EMBL/GenBank/DDBJ databases">
        <authorList>
            <person name="Mural R.J."/>
            <person name="Istrail S."/>
            <person name="Sutton G.G."/>
            <person name="Florea L."/>
            <person name="Halpern A.L."/>
            <person name="Mobarry C.M."/>
            <person name="Lippert R."/>
            <person name="Walenz B."/>
            <person name="Shatkay H."/>
            <person name="Dew I."/>
            <person name="Miller J.R."/>
            <person name="Flanigan M.J."/>
            <person name="Edwards N.J."/>
            <person name="Bolanos R."/>
            <person name="Fasulo D."/>
            <person name="Halldorsson B.V."/>
            <person name="Hannenhalli S."/>
            <person name="Turner R."/>
            <person name="Yooseph S."/>
            <person name="Lu F."/>
            <person name="Nusskern D.R."/>
            <person name="Shue B.C."/>
            <person name="Zheng X.H."/>
            <person name="Zhong F."/>
            <person name="Delcher A.L."/>
            <person name="Huson D.H."/>
            <person name="Kravitz S.A."/>
            <person name="Mouchard L."/>
            <person name="Reinert K."/>
            <person name="Remington K.A."/>
            <person name="Clark A.G."/>
            <person name="Waterman M.S."/>
            <person name="Eichler E.E."/>
            <person name="Adams M.D."/>
            <person name="Hunkapiller M.W."/>
            <person name="Myers E.W."/>
            <person name="Venter J.C."/>
        </authorList>
    </citation>
    <scope>NUCLEOTIDE SEQUENCE [LARGE SCALE GENOMIC DNA]</scope>
</reference>
<reference key="4">
    <citation type="journal article" date="1995" name="Growth Factors">
        <title>Growth/differentiation factor-10: a new member of the transforming growth factor-beta superfamily related to bone morphogenetic protein-3.</title>
        <authorList>
            <person name="Cunningham N.S."/>
            <person name="Jenkins N.A."/>
            <person name="Gilbert D.J."/>
            <person name="Copeland N.G."/>
            <person name="Reddi A.H."/>
            <person name="Lee S.-J."/>
        </authorList>
    </citation>
    <scope>NUCLEOTIDE SEQUENCE OF 360-478</scope>
    <source>
        <tissue>Uterus</tissue>
    </source>
</reference>
<keyword id="KW-0165">Cleavage on pair of basic residues</keyword>
<keyword id="KW-0202">Cytokine</keyword>
<keyword id="KW-1015">Disulfide bond</keyword>
<keyword id="KW-0325">Glycoprotein</keyword>
<keyword id="KW-0339">Growth factor</keyword>
<keyword id="KW-0892">Osteogenesis</keyword>
<keyword id="KW-1267">Proteomics identification</keyword>
<keyword id="KW-1185">Reference proteome</keyword>
<keyword id="KW-0964">Secreted</keyword>
<keyword id="KW-0732">Signal</keyword>
<accession>P55107</accession>
<accession>Q5VSQ8</accession>
<accession>Q9UCX6</accession>
<proteinExistence type="evidence at protein level"/>